<protein>
    <recommendedName>
        <fullName evidence="1">Ferrochelatase</fullName>
        <ecNumber evidence="1">4.98.1.1</ecNumber>
    </recommendedName>
    <alternativeName>
        <fullName evidence="1">Heme synthase</fullName>
    </alternativeName>
    <alternativeName>
        <fullName evidence="1">Protoheme ferro-lyase</fullName>
    </alternativeName>
</protein>
<feature type="chain" id="PRO_1000019346" description="Ferrochelatase">
    <location>
        <begin position="1"/>
        <end position="337"/>
    </location>
</feature>
<feature type="binding site" evidence="1">
    <location>
        <position position="189"/>
    </location>
    <ligand>
        <name>Fe cation</name>
        <dbReference type="ChEBI" id="CHEBI:24875"/>
    </ligand>
</feature>
<feature type="binding site" evidence="1">
    <location>
        <position position="293"/>
    </location>
    <ligand>
        <name>Fe cation</name>
        <dbReference type="ChEBI" id="CHEBI:24875"/>
    </ligand>
</feature>
<comment type="function">
    <text evidence="1">Catalyzes the ferrous insertion into protoporphyrin IX.</text>
</comment>
<comment type="catalytic activity">
    <reaction evidence="1">
        <text>heme b + 2 H(+) = protoporphyrin IX + Fe(2+)</text>
        <dbReference type="Rhea" id="RHEA:22584"/>
        <dbReference type="ChEBI" id="CHEBI:15378"/>
        <dbReference type="ChEBI" id="CHEBI:29033"/>
        <dbReference type="ChEBI" id="CHEBI:57306"/>
        <dbReference type="ChEBI" id="CHEBI:60344"/>
        <dbReference type="EC" id="4.98.1.1"/>
    </reaction>
</comment>
<comment type="pathway">
    <text evidence="1">Porphyrin-containing compound metabolism; protoheme biosynthesis; protoheme from protoporphyrin-IX: step 1/1.</text>
</comment>
<comment type="subcellular location">
    <subcellularLocation>
        <location evidence="1">Cytoplasm</location>
    </subcellularLocation>
</comment>
<comment type="similarity">
    <text evidence="1">Belongs to the ferrochelatase family.</text>
</comment>
<name>HEMH_PSEE4</name>
<dbReference type="EC" id="4.98.1.1" evidence="1"/>
<dbReference type="EMBL" id="CT573326">
    <property type="protein sequence ID" value="CAK13794.1"/>
    <property type="molecule type" value="Genomic_DNA"/>
</dbReference>
<dbReference type="RefSeq" id="WP_011532221.1">
    <property type="nucleotide sequence ID" value="NC_008027.1"/>
</dbReference>
<dbReference type="SMR" id="Q1IEW1"/>
<dbReference type="STRING" id="384676.PSEEN0886"/>
<dbReference type="GeneID" id="32804187"/>
<dbReference type="KEGG" id="pen:PSEEN0886"/>
<dbReference type="eggNOG" id="COG0276">
    <property type="taxonomic scope" value="Bacteria"/>
</dbReference>
<dbReference type="HOGENOM" id="CLU_018884_0_1_6"/>
<dbReference type="OrthoDB" id="9809741at2"/>
<dbReference type="UniPathway" id="UPA00252">
    <property type="reaction ID" value="UER00325"/>
</dbReference>
<dbReference type="Proteomes" id="UP000000658">
    <property type="component" value="Chromosome"/>
</dbReference>
<dbReference type="GO" id="GO:0005737">
    <property type="term" value="C:cytoplasm"/>
    <property type="evidence" value="ECO:0007669"/>
    <property type="project" value="UniProtKB-SubCell"/>
</dbReference>
<dbReference type="GO" id="GO:0004325">
    <property type="term" value="F:ferrochelatase activity"/>
    <property type="evidence" value="ECO:0007669"/>
    <property type="project" value="UniProtKB-UniRule"/>
</dbReference>
<dbReference type="GO" id="GO:0046872">
    <property type="term" value="F:metal ion binding"/>
    <property type="evidence" value="ECO:0007669"/>
    <property type="project" value="UniProtKB-KW"/>
</dbReference>
<dbReference type="GO" id="GO:0006783">
    <property type="term" value="P:heme biosynthetic process"/>
    <property type="evidence" value="ECO:0007669"/>
    <property type="project" value="UniProtKB-UniRule"/>
</dbReference>
<dbReference type="CDD" id="cd00419">
    <property type="entry name" value="Ferrochelatase_C"/>
    <property type="match status" value="1"/>
</dbReference>
<dbReference type="CDD" id="cd03411">
    <property type="entry name" value="Ferrochelatase_N"/>
    <property type="match status" value="1"/>
</dbReference>
<dbReference type="Gene3D" id="3.40.50.1400">
    <property type="match status" value="2"/>
</dbReference>
<dbReference type="HAMAP" id="MF_00323">
    <property type="entry name" value="Ferrochelatase"/>
    <property type="match status" value="1"/>
</dbReference>
<dbReference type="InterPro" id="IPR001015">
    <property type="entry name" value="Ferrochelatase"/>
</dbReference>
<dbReference type="InterPro" id="IPR033644">
    <property type="entry name" value="Ferrochelatase_C"/>
</dbReference>
<dbReference type="InterPro" id="IPR033659">
    <property type="entry name" value="Ferrochelatase_N"/>
</dbReference>
<dbReference type="NCBIfam" id="TIGR00109">
    <property type="entry name" value="hemH"/>
    <property type="match status" value="1"/>
</dbReference>
<dbReference type="PANTHER" id="PTHR11108">
    <property type="entry name" value="FERROCHELATASE"/>
    <property type="match status" value="1"/>
</dbReference>
<dbReference type="PANTHER" id="PTHR11108:SF1">
    <property type="entry name" value="FERROCHELATASE, MITOCHONDRIAL"/>
    <property type="match status" value="1"/>
</dbReference>
<dbReference type="Pfam" id="PF00762">
    <property type="entry name" value="Ferrochelatase"/>
    <property type="match status" value="1"/>
</dbReference>
<dbReference type="SUPFAM" id="SSF53800">
    <property type="entry name" value="Chelatase"/>
    <property type="match status" value="1"/>
</dbReference>
<gene>
    <name evidence="1" type="primary">hemH</name>
    <name type="ordered locus">PSEEN0886</name>
</gene>
<organism>
    <name type="scientific">Pseudomonas entomophila (strain L48)</name>
    <dbReference type="NCBI Taxonomy" id="384676"/>
    <lineage>
        <taxon>Bacteria</taxon>
        <taxon>Pseudomonadati</taxon>
        <taxon>Pseudomonadota</taxon>
        <taxon>Gammaproteobacteria</taxon>
        <taxon>Pseudomonadales</taxon>
        <taxon>Pseudomonadaceae</taxon>
        <taxon>Pseudomonas</taxon>
    </lineage>
</organism>
<accession>Q1IEW1</accession>
<evidence type="ECO:0000255" key="1">
    <source>
        <dbReference type="HAMAP-Rule" id="MF_00323"/>
    </source>
</evidence>
<sequence>MTDHALLLVNLGSPASTSVADVRRYLNQFLMDPYVIDLPWPVRRLLVSLILIKRPEQSAHAYASIWWDEGSPLVVLTRRLQAAMVEHWPHGPVEIAMRYGEPALPDVLERLAAQGVRKVTLAPLYPQFADSTVTTVVELAKQTIAERKLPLQTRILQPFYDHPDYIQALAASARPYLEQQYDHLLLSFHGLPERHLKKLDPSGNHDFQAADCCKDASAEMRAVCYRGQCLATAKAFAQKMGIPDGKWSVSFQSRLGRAKWIEPYTETRLDELGKAGVKKLLVMCPAFVADCIETLEEIGDRGKEQFIEAGGKELVLVPCLNDHPEWVRVLAGMCENA</sequence>
<reference key="1">
    <citation type="journal article" date="2006" name="Nat. Biotechnol.">
        <title>Complete genome sequence of the entomopathogenic and metabolically versatile soil bacterium Pseudomonas entomophila.</title>
        <authorList>
            <person name="Vodovar N."/>
            <person name="Vallenet D."/>
            <person name="Cruveiller S."/>
            <person name="Rouy Z."/>
            <person name="Barbe V."/>
            <person name="Acosta C."/>
            <person name="Cattolico L."/>
            <person name="Jubin C."/>
            <person name="Lajus A."/>
            <person name="Segurens B."/>
            <person name="Vacherie B."/>
            <person name="Wincker P."/>
            <person name="Weissenbach J."/>
            <person name="Lemaitre B."/>
            <person name="Medigue C."/>
            <person name="Boccard F."/>
        </authorList>
    </citation>
    <scope>NUCLEOTIDE SEQUENCE [LARGE SCALE GENOMIC DNA]</scope>
    <source>
        <strain>L48</strain>
    </source>
</reference>
<keyword id="KW-0963">Cytoplasm</keyword>
<keyword id="KW-0350">Heme biosynthesis</keyword>
<keyword id="KW-0408">Iron</keyword>
<keyword id="KW-0456">Lyase</keyword>
<keyword id="KW-0479">Metal-binding</keyword>
<keyword id="KW-0627">Porphyrin biosynthesis</keyword>
<proteinExistence type="inferred from homology"/>